<comment type="function">
    <text evidence="1">F(1)F(0) ATP synthase produces ATP from ADP in the presence of a proton or sodium gradient. F-type ATPases consist of two structural domains, F(1) containing the extramembraneous catalytic core and F(0) containing the membrane proton channel, linked together by a central stalk and a peripheral stalk. During catalysis, ATP synthesis in the catalytic domain of F(1) is coupled via a rotary mechanism of the central stalk subunits to proton translocation.</text>
</comment>
<comment type="function">
    <text evidence="1">Component of the F(0) channel, it forms part of the peripheral stalk, linking F(1) to F(0).</text>
</comment>
<comment type="subunit">
    <text evidence="1">F-type ATPases have 2 components, F(1) - the catalytic core - and F(0) - the membrane proton channel. F(1) has five subunits: alpha(3), beta(3), gamma(1), delta(1), epsilon(1). F(0) has three main subunits: a(1), b(2) and c(10-14). The alpha and beta chains form an alternating ring which encloses part of the gamma chain. F(1) is attached to F(0) by a central stalk formed by the gamma and epsilon chains, while a peripheral stalk is formed by the delta and b chains.</text>
</comment>
<comment type="subcellular location">
    <subcellularLocation>
        <location evidence="1">Cell inner membrane</location>
        <topology evidence="1">Single-pass membrane protein</topology>
    </subcellularLocation>
</comment>
<comment type="similarity">
    <text evidence="1">Belongs to the ATPase B chain family.</text>
</comment>
<organism>
    <name type="scientific">Escherichia coli O6:K15:H31 (strain 536 / UPEC)</name>
    <dbReference type="NCBI Taxonomy" id="362663"/>
    <lineage>
        <taxon>Bacteria</taxon>
        <taxon>Pseudomonadati</taxon>
        <taxon>Pseudomonadota</taxon>
        <taxon>Gammaproteobacteria</taxon>
        <taxon>Enterobacterales</taxon>
        <taxon>Enterobacteriaceae</taxon>
        <taxon>Escherichia</taxon>
    </lineage>
</organism>
<accession>Q0TAX3</accession>
<name>ATPF_ECOL5</name>
<sequence length="156" mass="17264">MNLNATILGQAIAFVLFVLFCMKYVWPPLMAAIEKRQKEIADGLASAERAHKDLDLAKASATDQLKKAKAEAQVIIEQANKRRSQILDEAKAEAEQERTKIVAQAQAEIEAERKRAREELRKQVAILAVAGAEKIIERSVDEAANSDIVDKLVAEL</sequence>
<protein>
    <recommendedName>
        <fullName evidence="1">ATP synthase subunit b</fullName>
    </recommendedName>
    <alternativeName>
        <fullName evidence="1">ATP synthase F(0) sector subunit b</fullName>
    </alternativeName>
    <alternativeName>
        <fullName evidence="1">ATPase subunit I</fullName>
    </alternativeName>
    <alternativeName>
        <fullName evidence="1">F-type ATPase subunit b</fullName>
        <shortName evidence="1">F-ATPase subunit b</shortName>
    </alternativeName>
</protein>
<reference key="1">
    <citation type="journal article" date="2006" name="Mol. Microbiol.">
        <title>Role of pathogenicity island-associated integrases in the genome plasticity of uropathogenic Escherichia coli strain 536.</title>
        <authorList>
            <person name="Hochhut B."/>
            <person name="Wilde C."/>
            <person name="Balling G."/>
            <person name="Middendorf B."/>
            <person name="Dobrindt U."/>
            <person name="Brzuszkiewicz E."/>
            <person name="Gottschalk G."/>
            <person name="Carniel E."/>
            <person name="Hacker J."/>
        </authorList>
    </citation>
    <scope>NUCLEOTIDE SEQUENCE [LARGE SCALE GENOMIC DNA]</scope>
    <source>
        <strain>536 / UPEC</strain>
    </source>
</reference>
<gene>
    <name evidence="1" type="primary">atpF</name>
    <name type="ordered locus">ECP_3935</name>
</gene>
<dbReference type="EMBL" id="CP000247">
    <property type="protein sequence ID" value="ABG71906.1"/>
    <property type="molecule type" value="Genomic_DNA"/>
</dbReference>
<dbReference type="RefSeq" id="WP_001052219.1">
    <property type="nucleotide sequence ID" value="NC_008253.1"/>
</dbReference>
<dbReference type="SMR" id="Q0TAX3"/>
<dbReference type="GeneID" id="93778231"/>
<dbReference type="KEGG" id="ecp:ECP_3935"/>
<dbReference type="HOGENOM" id="CLU_079215_4_5_6"/>
<dbReference type="Proteomes" id="UP000009182">
    <property type="component" value="Chromosome"/>
</dbReference>
<dbReference type="GO" id="GO:0005886">
    <property type="term" value="C:plasma membrane"/>
    <property type="evidence" value="ECO:0007669"/>
    <property type="project" value="UniProtKB-SubCell"/>
</dbReference>
<dbReference type="GO" id="GO:0045259">
    <property type="term" value="C:proton-transporting ATP synthase complex"/>
    <property type="evidence" value="ECO:0007669"/>
    <property type="project" value="UniProtKB-KW"/>
</dbReference>
<dbReference type="GO" id="GO:0046933">
    <property type="term" value="F:proton-transporting ATP synthase activity, rotational mechanism"/>
    <property type="evidence" value="ECO:0007669"/>
    <property type="project" value="UniProtKB-UniRule"/>
</dbReference>
<dbReference type="GO" id="GO:0046961">
    <property type="term" value="F:proton-transporting ATPase activity, rotational mechanism"/>
    <property type="evidence" value="ECO:0007669"/>
    <property type="project" value="TreeGrafter"/>
</dbReference>
<dbReference type="CDD" id="cd06503">
    <property type="entry name" value="ATP-synt_Fo_b"/>
    <property type="match status" value="1"/>
</dbReference>
<dbReference type="FunFam" id="1.20.5.620:FF:000001">
    <property type="entry name" value="ATP synthase subunit b"/>
    <property type="match status" value="1"/>
</dbReference>
<dbReference type="Gene3D" id="1.20.5.620">
    <property type="entry name" value="F1F0 ATP synthase subunit B, membrane domain"/>
    <property type="match status" value="1"/>
</dbReference>
<dbReference type="HAMAP" id="MF_01398">
    <property type="entry name" value="ATP_synth_b_bprime"/>
    <property type="match status" value="1"/>
</dbReference>
<dbReference type="InterPro" id="IPR028987">
    <property type="entry name" value="ATP_synth_B-like_membr_sf"/>
</dbReference>
<dbReference type="InterPro" id="IPR002146">
    <property type="entry name" value="ATP_synth_b/b'su_bac/chlpt"/>
</dbReference>
<dbReference type="InterPro" id="IPR005864">
    <property type="entry name" value="ATP_synth_F0_bsu_bac"/>
</dbReference>
<dbReference type="InterPro" id="IPR050059">
    <property type="entry name" value="ATP_synthase_B_chain"/>
</dbReference>
<dbReference type="NCBIfam" id="TIGR01144">
    <property type="entry name" value="ATP_synt_b"/>
    <property type="match status" value="1"/>
</dbReference>
<dbReference type="NCBIfam" id="NF004411">
    <property type="entry name" value="PRK05759.1-2"/>
    <property type="match status" value="1"/>
</dbReference>
<dbReference type="NCBIfam" id="NF004413">
    <property type="entry name" value="PRK05759.1-4"/>
    <property type="match status" value="1"/>
</dbReference>
<dbReference type="PANTHER" id="PTHR33445:SF1">
    <property type="entry name" value="ATP SYNTHASE SUBUNIT B"/>
    <property type="match status" value="1"/>
</dbReference>
<dbReference type="PANTHER" id="PTHR33445">
    <property type="entry name" value="ATP SYNTHASE SUBUNIT B', CHLOROPLASTIC"/>
    <property type="match status" value="1"/>
</dbReference>
<dbReference type="Pfam" id="PF00430">
    <property type="entry name" value="ATP-synt_B"/>
    <property type="match status" value="1"/>
</dbReference>
<dbReference type="SUPFAM" id="SSF81573">
    <property type="entry name" value="F1F0 ATP synthase subunit B, membrane domain"/>
    <property type="match status" value="1"/>
</dbReference>
<keyword id="KW-0066">ATP synthesis</keyword>
<keyword id="KW-0997">Cell inner membrane</keyword>
<keyword id="KW-1003">Cell membrane</keyword>
<keyword id="KW-0138">CF(0)</keyword>
<keyword id="KW-0375">Hydrogen ion transport</keyword>
<keyword id="KW-0406">Ion transport</keyword>
<keyword id="KW-0472">Membrane</keyword>
<keyword id="KW-0812">Transmembrane</keyword>
<keyword id="KW-1133">Transmembrane helix</keyword>
<keyword id="KW-0813">Transport</keyword>
<evidence type="ECO:0000255" key="1">
    <source>
        <dbReference type="HAMAP-Rule" id="MF_01398"/>
    </source>
</evidence>
<proteinExistence type="inferred from homology"/>
<feature type="chain" id="PRO_0000368480" description="ATP synthase subunit b">
    <location>
        <begin position="1"/>
        <end position="156"/>
    </location>
</feature>
<feature type="transmembrane region" description="Helical" evidence="1">
    <location>
        <begin position="11"/>
        <end position="31"/>
    </location>
</feature>